<dbReference type="EMBL" id="M37132">
    <property type="protein sequence ID" value="AAA35063.1"/>
    <property type="molecule type" value="Genomic_DNA"/>
</dbReference>
<dbReference type="EMBL" id="M32028">
    <property type="protein sequence ID" value="AAA35064.1"/>
    <property type="molecule type" value="Genomic_DNA"/>
</dbReference>
<dbReference type="EMBL" id="U11582">
    <property type="protein sequence ID" value="AAB65078.1"/>
    <property type="molecule type" value="Genomic_DNA"/>
</dbReference>
<dbReference type="EMBL" id="BK006934">
    <property type="protein sequence ID" value="DAA06660.1"/>
    <property type="molecule type" value="Genomic_DNA"/>
</dbReference>
<dbReference type="PIR" id="A36313">
    <property type="entry name" value="A36313"/>
</dbReference>
<dbReference type="RefSeq" id="NP_011838.1">
    <molecule id="P18888-1"/>
    <property type="nucleotide sequence ID" value="NM_001179105.1"/>
</dbReference>
<dbReference type="PDB" id="6UXV">
    <property type="method" value="EM"/>
    <property type="resolution" value="4.70 A"/>
    <property type="chains" value="I=1-150"/>
</dbReference>
<dbReference type="PDB" id="6UXW">
    <property type="method" value="EM"/>
    <property type="resolution" value="8.96 A"/>
    <property type="chains" value="I=1-150"/>
</dbReference>
<dbReference type="PDB" id="7C4J">
    <property type="method" value="EM"/>
    <property type="resolution" value="2.89 A"/>
    <property type="chains" value="C=1-332"/>
</dbReference>
<dbReference type="PDB" id="7EGM">
    <property type="method" value="EM"/>
    <property type="resolution" value="3.60 A"/>
    <property type="chains" value="I=1-332"/>
</dbReference>
<dbReference type="PDB" id="7EGP">
    <property type="method" value="EM"/>
    <property type="resolution" value="6.90 A"/>
    <property type="chains" value="I=1-332"/>
</dbReference>
<dbReference type="PDBsum" id="6UXV"/>
<dbReference type="PDBsum" id="6UXW"/>
<dbReference type="PDBsum" id="7C4J"/>
<dbReference type="PDBsum" id="7EGM"/>
<dbReference type="PDBsum" id="7EGP"/>
<dbReference type="EMDB" id="EMD-20933"/>
<dbReference type="EMDB" id="EMD-20934"/>
<dbReference type="EMDB" id="EMD-30285"/>
<dbReference type="EMDB" id="EMD-31136"/>
<dbReference type="EMDB" id="EMD-31137"/>
<dbReference type="SMR" id="P18888"/>
<dbReference type="BioGRID" id="36397">
    <property type="interactions" value="560"/>
</dbReference>
<dbReference type="ComplexPortal" id="CPX-1150">
    <property type="entry name" value="SWI/SNF chromatin remodelling complex"/>
</dbReference>
<dbReference type="DIP" id="DIP-1226N"/>
<dbReference type="FunCoup" id="P18888">
    <property type="interactions" value="241"/>
</dbReference>
<dbReference type="IntAct" id="P18888">
    <property type="interactions" value="44"/>
</dbReference>
<dbReference type="MINT" id="P18888"/>
<dbReference type="STRING" id="4932.YHL025W"/>
<dbReference type="iPTMnet" id="P18888"/>
<dbReference type="PaxDb" id="4932-YHL025W"/>
<dbReference type="PeptideAtlas" id="P18888"/>
<dbReference type="EnsemblFungi" id="YHL025W_mRNA">
    <molecule id="P18888-1"/>
    <property type="protein sequence ID" value="YHL025W"/>
    <property type="gene ID" value="YHL025W"/>
</dbReference>
<dbReference type="GeneID" id="856360"/>
<dbReference type="KEGG" id="sce:YHL025W"/>
<dbReference type="AGR" id="SGD:S000001017"/>
<dbReference type="SGD" id="S000001017">
    <property type="gene designation" value="SNF6"/>
</dbReference>
<dbReference type="VEuPathDB" id="FungiDB:YHL025W"/>
<dbReference type="eggNOG" id="ENOG502S1YQ">
    <property type="taxonomic scope" value="Eukaryota"/>
</dbReference>
<dbReference type="HOGENOM" id="CLU_051557_0_0_1"/>
<dbReference type="InParanoid" id="P18888"/>
<dbReference type="OMA" id="APPDYWE"/>
<dbReference type="OrthoDB" id="4034416at2759"/>
<dbReference type="BioCyc" id="YEAST:G3O-31045-MONOMER"/>
<dbReference type="BioGRID-ORCS" id="856360">
    <property type="hits" value="0 hits in 10 CRISPR screens"/>
</dbReference>
<dbReference type="PRO" id="PR:P18888"/>
<dbReference type="Proteomes" id="UP000002311">
    <property type="component" value="Chromosome VIII"/>
</dbReference>
<dbReference type="RNAct" id="P18888">
    <property type="molecule type" value="protein"/>
</dbReference>
<dbReference type="GO" id="GO:0000785">
    <property type="term" value="C:chromatin"/>
    <property type="evidence" value="ECO:0000303"/>
    <property type="project" value="ComplexPortal"/>
</dbReference>
<dbReference type="GO" id="GO:0005829">
    <property type="term" value="C:cytosol"/>
    <property type="evidence" value="ECO:0000314"/>
    <property type="project" value="SGD"/>
</dbReference>
<dbReference type="GO" id="GO:0005634">
    <property type="term" value="C:nucleus"/>
    <property type="evidence" value="ECO:0000314"/>
    <property type="project" value="SGD"/>
</dbReference>
<dbReference type="GO" id="GO:0016514">
    <property type="term" value="C:SWI/SNF complex"/>
    <property type="evidence" value="ECO:0000314"/>
    <property type="project" value="SGD"/>
</dbReference>
<dbReference type="GO" id="GO:0000182">
    <property type="term" value="F:rDNA binding"/>
    <property type="evidence" value="ECO:0000314"/>
    <property type="project" value="SGD"/>
</dbReference>
<dbReference type="GO" id="GO:0006338">
    <property type="term" value="P:chromatin remodeling"/>
    <property type="evidence" value="ECO:0000314"/>
    <property type="project" value="ComplexPortal"/>
</dbReference>
<dbReference type="GO" id="GO:0000470">
    <property type="term" value="P:maturation of LSU-rRNA"/>
    <property type="evidence" value="ECO:0000315"/>
    <property type="project" value="SGD"/>
</dbReference>
<dbReference type="GO" id="GO:0006289">
    <property type="term" value="P:nucleotide-excision repair"/>
    <property type="evidence" value="ECO:0000315"/>
    <property type="project" value="SGD"/>
</dbReference>
<dbReference type="GO" id="GO:0045943">
    <property type="term" value="P:positive regulation of transcription by RNA polymerase I"/>
    <property type="evidence" value="ECO:0000315"/>
    <property type="project" value="SGD"/>
</dbReference>
<dbReference type="GO" id="GO:0045944">
    <property type="term" value="P:positive regulation of transcription by RNA polymerase II"/>
    <property type="evidence" value="ECO:0000315"/>
    <property type="project" value="SGD"/>
</dbReference>
<dbReference type="GO" id="GO:0006357">
    <property type="term" value="P:regulation of transcription by RNA polymerase II"/>
    <property type="evidence" value="ECO:0000314"/>
    <property type="project" value="ComplexPortal"/>
</dbReference>
<dbReference type="CDD" id="cd22571">
    <property type="entry name" value="SNF6"/>
    <property type="match status" value="1"/>
</dbReference>
<organism>
    <name type="scientific">Saccharomyces cerevisiae (strain ATCC 204508 / S288c)</name>
    <name type="common">Baker's yeast</name>
    <dbReference type="NCBI Taxonomy" id="559292"/>
    <lineage>
        <taxon>Eukaryota</taxon>
        <taxon>Fungi</taxon>
        <taxon>Dikarya</taxon>
        <taxon>Ascomycota</taxon>
        <taxon>Saccharomycotina</taxon>
        <taxon>Saccharomycetes</taxon>
        <taxon>Saccharomycetales</taxon>
        <taxon>Saccharomycetaceae</taxon>
        <taxon>Saccharomyces</taxon>
    </lineage>
</organism>
<sequence length="332" mass="37607">MGVIKKKRSHHGKASRQQYYSGVQVGGVGSMGAINNNIPSLTSFAEENNYQYGYSGSSAGMNGRSLTYAQQQLNKQRQDFERVRLRPEQLSNIIHDESDTISFRSNLLKNFISSNDAFNMLSLTTVPCDRIEKSRLFSEKTIRYLMQKQHEMKTQAAELQEKPLTPLKYTKLIAAAEDGSRSTKDMIDAVFEQDSHLRYQPDGVVVHRDDPALVGKLRGDLREAPADYWTHAYRDVLAQYHEAKERIRQKEVTAGEAQDEASLQQQQQQDLQQQQQVVTTVASQSPHATATEKEPVPAVVDDPLENMFGDYSNEPFNTNFDDEFGDLDAVFF</sequence>
<name>SNF6_YEAST</name>
<feature type="chain" id="PRO_0000072006" description="Transcription regulatory protein SNF6">
    <location>
        <begin position="1"/>
        <end position="332"/>
    </location>
</feature>
<feature type="region of interest" description="Disordered" evidence="2">
    <location>
        <begin position="278"/>
        <end position="299"/>
    </location>
</feature>
<feature type="short sequence motif" description="Nuclear localization signal" evidence="1">
    <location>
        <begin position="2"/>
        <end position="8"/>
    </location>
</feature>
<feature type="modified residue" description="Phosphothreonine" evidence="5">
    <location>
        <position position="165"/>
    </location>
</feature>
<feature type="helix" evidence="6">
    <location>
        <begin position="70"/>
        <end position="84"/>
    </location>
</feature>
<feature type="strand" evidence="6">
    <location>
        <begin position="90"/>
        <end position="92"/>
    </location>
</feature>
<feature type="turn" evidence="6">
    <location>
        <begin position="97"/>
        <end position="99"/>
    </location>
</feature>
<feature type="helix" evidence="6">
    <location>
        <begin position="103"/>
        <end position="122"/>
    </location>
</feature>
<feature type="strand" evidence="6">
    <location>
        <begin position="128"/>
        <end position="132"/>
    </location>
</feature>
<feature type="helix" evidence="6">
    <location>
        <begin position="139"/>
        <end position="153"/>
    </location>
</feature>
<feature type="helix" evidence="6">
    <location>
        <begin position="170"/>
        <end position="177"/>
    </location>
</feature>
<feature type="strand" evidence="6">
    <location>
        <begin position="178"/>
        <end position="181"/>
    </location>
</feature>
<feature type="helix" evidence="6">
    <location>
        <begin position="184"/>
        <end position="190"/>
    </location>
</feature>
<feature type="strand" evidence="6">
    <location>
        <begin position="197"/>
        <end position="209"/>
    </location>
</feature>
<feature type="helix" evidence="6">
    <location>
        <begin position="213"/>
        <end position="215"/>
    </location>
</feature>
<feature type="helix" evidence="6">
    <location>
        <begin position="232"/>
        <end position="243"/>
    </location>
</feature>
<gene>
    <name type="primary">SNF6</name>
    <name type="ordered locus">YHL025W</name>
</gene>
<proteinExistence type="evidence at protein level"/>
<comment type="function">
    <text>Involved in transcriptional activation. Component of the SWI/SNF complex, an ATP-dependent chromatin remodeling complex, which is required for the positive and negative regulation of gene expression of a large number of genes. It changes chromatin structure by altering DNA-histone contacts within a nucleosome, leading eventually to a change in nucleosome position, thus facilitating or repressing binding of gene-specific transcription factors.</text>
</comment>
<comment type="subunit">
    <text>Component of the SWI/SNF global transcription activator complex. The 1.14 MDa SWI/SNF complex is composed of 11 different subunits: one copy each of SWI1, SNF2/SWI2, SNF5, SNF12/SWP73, ARP7/SWP61, ARP9/SWP59; two copies each of SWI3, SNF6, SNF11, SWP82; and three copies of TAF14/SWP29.</text>
</comment>
<comment type="interaction">
    <interactant intactId="EBI-17550">
        <id>P18888</id>
    </interactant>
    <interactant intactId="EBI-14668">
        <id>P32628</id>
        <label>RAD23</label>
    </interactant>
    <organismsDiffer>false</organismsDiffer>
    <experiments>2</experiments>
</comment>
<comment type="interaction">
    <interactant intactId="EBI-17550">
        <id>P18888</id>
    </interactant>
    <interactant intactId="EBI-14766">
        <id>P14736</id>
        <label>RAD4</label>
    </interactant>
    <organismsDiffer>false</organismsDiffer>
    <experiments>2</experiments>
</comment>
<comment type="interaction">
    <interactant intactId="EBI-17550">
        <id>P18888</id>
    </interactant>
    <interactant intactId="EBI-17560">
        <id>P38956</id>
        <label>SNF11</label>
    </interactant>
    <organismsDiffer>false</organismsDiffer>
    <experiments>5</experiments>
</comment>
<comment type="interaction">
    <interactant intactId="EBI-17550">
        <id>P18888</id>
    </interactant>
    <interactant intactId="EBI-18622">
        <id>P32591</id>
        <label>SWI3</label>
    </interactant>
    <organismsDiffer>false</organismsDiffer>
    <experiments>8</experiments>
</comment>
<comment type="interaction">
    <interactant intactId="EBI-17550">
        <id>P18888</id>
    </interactant>
    <interactant intactId="EBI-18920">
        <id>P35189</id>
        <label>TAF14</label>
    </interactant>
    <organismsDiffer>false</organismsDiffer>
    <experiments>5</experiments>
</comment>
<comment type="subcellular location">
    <subcellularLocation>
        <location>Nucleus</location>
    </subcellularLocation>
</comment>
<comment type="alternative products">
    <event type="alternative initiation"/>
    <isoform>
        <id>P18888-1</id>
        <name>Long</name>
        <sequence type="displayed"/>
    </isoform>
    <isoform>
        <id>P18888-2</id>
        <name>Short</name>
        <sequence type="not described"/>
    </isoform>
</comment>
<comment type="miscellaneous">
    <text evidence="3">Present with 2900 molecules/cell in log phase SD medium.</text>
</comment>
<comment type="miscellaneous">
    <molecule>Isoform Short</molecule>
    <text evidence="4">Partially functional.</text>
</comment>
<reference key="1">
    <citation type="journal article" date="1990" name="Mol. Cell. Biol.">
        <title>SNF6 encodes a nuclear protein that is required for expression of many genes in Saccharomyces cerevisiae.</title>
        <authorList>
            <person name="Estruch F."/>
            <person name="Carlson M."/>
        </authorList>
    </citation>
    <scope>NUCLEOTIDE SEQUENCE [GENOMIC DNA]</scope>
</reference>
<reference key="2">
    <citation type="journal article" date="1994" name="Science">
        <title>Complete nucleotide sequence of Saccharomyces cerevisiae chromosome VIII.</title>
        <authorList>
            <person name="Johnston M."/>
            <person name="Andrews S."/>
            <person name="Brinkman R."/>
            <person name="Cooper J."/>
            <person name="Ding H."/>
            <person name="Dover J."/>
            <person name="Du Z."/>
            <person name="Favello A."/>
            <person name="Fulton L."/>
            <person name="Gattung S."/>
            <person name="Geisel C."/>
            <person name="Kirsten J."/>
            <person name="Kucaba T."/>
            <person name="Hillier L.W."/>
            <person name="Jier M."/>
            <person name="Johnston L."/>
            <person name="Langston Y."/>
            <person name="Latreille P."/>
            <person name="Louis E.J."/>
            <person name="Macri C."/>
            <person name="Mardis E."/>
            <person name="Menezes S."/>
            <person name="Mouser L."/>
            <person name="Nhan M."/>
            <person name="Rifkin L."/>
            <person name="Riles L."/>
            <person name="St Peter H."/>
            <person name="Trevaskis E."/>
            <person name="Vaughan K."/>
            <person name="Vignati D."/>
            <person name="Wilcox L."/>
            <person name="Wohldman P."/>
            <person name="Waterston R."/>
            <person name="Wilson R."/>
            <person name="Vaudin M."/>
        </authorList>
    </citation>
    <scope>NUCLEOTIDE SEQUENCE [LARGE SCALE GENOMIC DNA]</scope>
    <source>
        <strain>ATCC 204508 / S288c</strain>
    </source>
</reference>
<reference key="3">
    <citation type="journal article" date="2014" name="G3 (Bethesda)">
        <title>The reference genome sequence of Saccharomyces cerevisiae: Then and now.</title>
        <authorList>
            <person name="Engel S.R."/>
            <person name="Dietrich F.S."/>
            <person name="Fisk D.G."/>
            <person name="Binkley G."/>
            <person name="Balakrishnan R."/>
            <person name="Costanzo M.C."/>
            <person name="Dwight S.S."/>
            <person name="Hitz B.C."/>
            <person name="Karra K."/>
            <person name="Nash R.S."/>
            <person name="Weng S."/>
            <person name="Wong E.D."/>
            <person name="Lloyd P."/>
            <person name="Skrzypek M.S."/>
            <person name="Miyasato S.R."/>
            <person name="Simison M."/>
            <person name="Cherry J.M."/>
        </authorList>
    </citation>
    <scope>GENOME REANNOTATION</scope>
    <source>
        <strain>ATCC 204508 / S288c</strain>
    </source>
</reference>
<reference key="4">
    <citation type="journal article" date="2003" name="Nature">
        <title>Global analysis of protein expression in yeast.</title>
        <authorList>
            <person name="Ghaemmaghami S."/>
            <person name="Huh W.-K."/>
            <person name="Bower K."/>
            <person name="Howson R.W."/>
            <person name="Belle A."/>
            <person name="Dephoure N."/>
            <person name="O'Shea E.K."/>
            <person name="Weissman J.S."/>
        </authorList>
    </citation>
    <scope>LEVEL OF PROTEIN EXPRESSION [LARGE SCALE ANALYSIS]</scope>
</reference>
<reference key="5">
    <citation type="journal article" date="2008" name="Mol. Cell. Proteomics">
        <title>A multidimensional chromatography technology for in-depth phosphoproteome analysis.</title>
        <authorList>
            <person name="Albuquerque C.P."/>
            <person name="Smolka M.B."/>
            <person name="Payne S.H."/>
            <person name="Bafna V."/>
            <person name="Eng J."/>
            <person name="Zhou H."/>
        </authorList>
    </citation>
    <scope>PHOSPHORYLATION [LARGE SCALE ANALYSIS] AT THR-165</scope>
    <scope>IDENTIFICATION BY MASS SPECTROMETRY [LARGE SCALE ANALYSIS]</scope>
</reference>
<reference key="6">
    <citation type="journal article" date="2012" name="Proc. Natl. Acad. Sci. U.S.A.">
        <title>N-terminal acetylome analyses and functional insights of the N-terminal acetyltransferase NatB.</title>
        <authorList>
            <person name="Van Damme P."/>
            <person name="Lasa M."/>
            <person name="Polevoda B."/>
            <person name="Gazquez C."/>
            <person name="Elosegui-Artola A."/>
            <person name="Kim D.S."/>
            <person name="De Juan-Pardo E."/>
            <person name="Demeyer K."/>
            <person name="Hole K."/>
            <person name="Larrea E."/>
            <person name="Timmerman E."/>
            <person name="Prieto J."/>
            <person name="Arnesen T."/>
            <person name="Sherman F."/>
            <person name="Gevaert K."/>
            <person name="Aldabe R."/>
        </authorList>
    </citation>
    <scope>IDENTIFICATION BY MASS SPECTROMETRY [LARGE SCALE ANALYSIS]</scope>
</reference>
<reference key="7">
    <citation type="journal article" date="2003" name="Nat. Struct. Biol.">
        <title>Structural analysis of the yeast SWI/SNF chromatin remodeling complex.</title>
        <authorList>
            <person name="Smith C.L."/>
            <person name="Horowitz-Scherer R."/>
            <person name="Flanagan J.F."/>
            <person name="Woodcock C.L."/>
            <person name="Peterson C.L."/>
        </authorList>
    </citation>
    <scope>3D-STRUCTURE MODELING OF THE SWI/SNF COMPLEX</scope>
    <scope>ELECTRON MICROSCOPY OF THE SWI/SNF COMPLEX</scope>
</reference>
<protein>
    <recommendedName>
        <fullName>Transcription regulatory protein SNF6</fullName>
    </recommendedName>
    <alternativeName>
        <fullName>SWI/SNF complex component SNF6</fullName>
    </alternativeName>
</protein>
<evidence type="ECO:0000255" key="1"/>
<evidence type="ECO:0000256" key="2">
    <source>
        <dbReference type="SAM" id="MobiDB-lite"/>
    </source>
</evidence>
<evidence type="ECO:0000269" key="3">
    <source>
    </source>
</evidence>
<evidence type="ECO:0000305" key="4"/>
<evidence type="ECO:0007744" key="5">
    <source>
    </source>
</evidence>
<evidence type="ECO:0007829" key="6">
    <source>
        <dbReference type="PDB" id="7C4J"/>
    </source>
</evidence>
<accession>P18888</accession>
<accession>D3DKU3</accession>
<keyword id="KW-0002">3D-structure</keyword>
<keyword id="KW-0010">Activator</keyword>
<keyword id="KW-0024">Alternative initiation</keyword>
<keyword id="KW-0539">Nucleus</keyword>
<keyword id="KW-0597">Phosphoprotein</keyword>
<keyword id="KW-1185">Reference proteome</keyword>
<keyword id="KW-0804">Transcription</keyword>
<keyword id="KW-0805">Transcription regulation</keyword>